<sequence>MASSATAPNSLSFFSSSLFLSSSHQIPKTYISVSKLGSGRVSKPLSVSSQLATLPILSFEGEKVGETYLDLKAAPEDTARAVVHRAIVTDLNNKRRGTASTLTRGEVRGGGIKPYSQKKTGHARRGSQRTPLRPGGGVVFGPRPKDWSIKINRKEKKLAISTALSSAASAEGGAIVVEEFGEKFEKPKTKDFLAAMQRWGLDPKEKAMFLMIDVDENVAKSSRNIGTLRMLTPRTLNLFDILNADKLVLTPAAVEFLNARYGVDAVEEEDDDEDETEGSEEA</sequence>
<name>RK4_ARATH</name>
<gene>
    <name type="primary">RPL4</name>
    <name type="ordered locus">At1g07320</name>
    <name type="ORF">F22G5.34</name>
    <name type="ORF">F22G5_28</name>
</gene>
<organism>
    <name type="scientific">Arabidopsis thaliana</name>
    <name type="common">Mouse-ear cress</name>
    <dbReference type="NCBI Taxonomy" id="3702"/>
    <lineage>
        <taxon>Eukaryota</taxon>
        <taxon>Viridiplantae</taxon>
        <taxon>Streptophyta</taxon>
        <taxon>Embryophyta</taxon>
        <taxon>Tracheophyta</taxon>
        <taxon>Spermatophyta</taxon>
        <taxon>Magnoliopsida</taxon>
        <taxon>eudicotyledons</taxon>
        <taxon>Gunneridae</taxon>
        <taxon>Pentapetalae</taxon>
        <taxon>rosids</taxon>
        <taxon>malvids</taxon>
        <taxon>Brassicales</taxon>
        <taxon>Brassicaceae</taxon>
        <taxon>Camelineae</taxon>
        <taxon>Arabidopsis</taxon>
    </lineage>
</organism>
<proteinExistence type="evidence at transcript level"/>
<keyword id="KW-0025">Alternative splicing</keyword>
<keyword id="KW-0150">Chloroplast</keyword>
<keyword id="KW-0934">Plastid</keyword>
<keyword id="KW-1185">Reference proteome</keyword>
<keyword id="KW-0687">Ribonucleoprotein</keyword>
<keyword id="KW-0689">Ribosomal protein</keyword>
<keyword id="KW-0694">RNA-binding</keyword>
<keyword id="KW-0699">rRNA-binding</keyword>
<keyword id="KW-0809">Transit peptide</keyword>
<protein>
    <recommendedName>
        <fullName evidence="3">Large ribosomal subunit protein uL4c</fullName>
    </recommendedName>
    <alternativeName>
        <fullName>50S ribosomal protein L4, chloroplastic</fullName>
    </alternativeName>
    <alternativeName>
        <fullName>CL4</fullName>
    </alternativeName>
    <alternativeName>
        <fullName>R-protein L4</fullName>
    </alternativeName>
</protein>
<feature type="transit peptide" description="Chloroplast" evidence="4">
    <location>
        <begin position="1"/>
        <end position="49"/>
    </location>
</feature>
<feature type="chain" id="PRO_0000030538" description="Large ribosomal subunit protein uL4c">
    <location>
        <begin position="50"/>
        <end position="282"/>
    </location>
</feature>
<feature type="region of interest" description="Disordered" evidence="2">
    <location>
        <begin position="106"/>
        <end position="138"/>
    </location>
</feature>
<feature type="sequence conflict" description="In Ref. 1; CAA74894/CAA74895." evidence="4" ref="1">
    <original>F</original>
    <variation>L</variation>
    <location>
        <position position="192"/>
    </location>
</feature>
<feature type="sequence conflict" description="In Ref. 5; AAM61637." evidence="4" ref="5">
    <original>A</original>
    <variation>P</variation>
    <location>
        <position position="207"/>
    </location>
</feature>
<reference key="1">
    <citation type="journal article" date="1998" name="J. Biol. Chem.">
        <title>The nuclear RPL4 gene encodes a chloroplast protein that co-purifies with the T7-like transcription complex as well as plastid ribosomes.</title>
        <authorList>
            <person name="Trifa Y."/>
            <person name="Privat I."/>
            <person name="Gagnon J."/>
            <person name="Baeza L."/>
            <person name="Lerbs-Mache S."/>
        </authorList>
    </citation>
    <scope>NUCLEOTIDE SEQUENCE [GENOMIC DNA / MRNA]</scope>
    <source>
        <strain>cv. Columbia</strain>
    </source>
</reference>
<reference key="2">
    <citation type="journal article" date="2000" name="Nature">
        <title>Sequence and analysis of chromosome 1 of the plant Arabidopsis thaliana.</title>
        <authorList>
            <person name="Theologis A."/>
            <person name="Ecker J.R."/>
            <person name="Palm C.J."/>
            <person name="Federspiel N.A."/>
            <person name="Kaul S."/>
            <person name="White O."/>
            <person name="Alonso J."/>
            <person name="Altafi H."/>
            <person name="Araujo R."/>
            <person name="Bowman C.L."/>
            <person name="Brooks S.Y."/>
            <person name="Buehler E."/>
            <person name="Chan A."/>
            <person name="Chao Q."/>
            <person name="Chen H."/>
            <person name="Cheuk R.F."/>
            <person name="Chin C.W."/>
            <person name="Chung M.K."/>
            <person name="Conn L."/>
            <person name="Conway A.B."/>
            <person name="Conway A.R."/>
            <person name="Creasy T.H."/>
            <person name="Dewar K."/>
            <person name="Dunn P."/>
            <person name="Etgu P."/>
            <person name="Feldblyum T.V."/>
            <person name="Feng J.-D."/>
            <person name="Fong B."/>
            <person name="Fujii C.Y."/>
            <person name="Gill J.E."/>
            <person name="Goldsmith A.D."/>
            <person name="Haas B."/>
            <person name="Hansen N.F."/>
            <person name="Hughes B."/>
            <person name="Huizar L."/>
            <person name="Hunter J.L."/>
            <person name="Jenkins J."/>
            <person name="Johnson-Hopson C."/>
            <person name="Khan S."/>
            <person name="Khaykin E."/>
            <person name="Kim C.J."/>
            <person name="Koo H.L."/>
            <person name="Kremenetskaia I."/>
            <person name="Kurtz D.B."/>
            <person name="Kwan A."/>
            <person name="Lam B."/>
            <person name="Langin-Hooper S."/>
            <person name="Lee A."/>
            <person name="Lee J.M."/>
            <person name="Lenz C.A."/>
            <person name="Li J.H."/>
            <person name="Li Y.-P."/>
            <person name="Lin X."/>
            <person name="Liu S.X."/>
            <person name="Liu Z.A."/>
            <person name="Luros J.S."/>
            <person name="Maiti R."/>
            <person name="Marziali A."/>
            <person name="Militscher J."/>
            <person name="Miranda M."/>
            <person name="Nguyen M."/>
            <person name="Nierman W.C."/>
            <person name="Osborne B.I."/>
            <person name="Pai G."/>
            <person name="Peterson J."/>
            <person name="Pham P.K."/>
            <person name="Rizzo M."/>
            <person name="Rooney T."/>
            <person name="Rowley D."/>
            <person name="Sakano H."/>
            <person name="Salzberg S.L."/>
            <person name="Schwartz J.R."/>
            <person name="Shinn P."/>
            <person name="Southwick A.M."/>
            <person name="Sun H."/>
            <person name="Tallon L.J."/>
            <person name="Tambunga G."/>
            <person name="Toriumi M.J."/>
            <person name="Town C.D."/>
            <person name="Utterback T."/>
            <person name="Van Aken S."/>
            <person name="Vaysberg M."/>
            <person name="Vysotskaia V.S."/>
            <person name="Walker M."/>
            <person name="Wu D."/>
            <person name="Yu G."/>
            <person name="Fraser C.M."/>
            <person name="Venter J.C."/>
            <person name="Davis R.W."/>
        </authorList>
    </citation>
    <scope>NUCLEOTIDE SEQUENCE [LARGE SCALE GENOMIC DNA]</scope>
    <source>
        <strain>cv. Columbia</strain>
    </source>
</reference>
<reference key="3">
    <citation type="journal article" date="2017" name="Plant J.">
        <title>Araport11: a complete reannotation of the Arabidopsis thaliana reference genome.</title>
        <authorList>
            <person name="Cheng C.Y."/>
            <person name="Krishnakumar V."/>
            <person name="Chan A.P."/>
            <person name="Thibaud-Nissen F."/>
            <person name="Schobel S."/>
            <person name="Town C.D."/>
        </authorList>
    </citation>
    <scope>GENOME REANNOTATION</scope>
    <source>
        <strain>cv. Columbia</strain>
    </source>
</reference>
<reference key="4">
    <citation type="journal article" date="2003" name="Science">
        <title>Empirical analysis of transcriptional activity in the Arabidopsis genome.</title>
        <authorList>
            <person name="Yamada K."/>
            <person name="Lim J."/>
            <person name="Dale J.M."/>
            <person name="Chen H."/>
            <person name="Shinn P."/>
            <person name="Palm C.J."/>
            <person name="Southwick A.M."/>
            <person name="Wu H.C."/>
            <person name="Kim C.J."/>
            <person name="Nguyen M."/>
            <person name="Pham P.K."/>
            <person name="Cheuk R.F."/>
            <person name="Karlin-Newmann G."/>
            <person name="Liu S.X."/>
            <person name="Lam B."/>
            <person name="Sakano H."/>
            <person name="Wu T."/>
            <person name="Yu G."/>
            <person name="Miranda M."/>
            <person name="Quach H.L."/>
            <person name="Tripp M."/>
            <person name="Chang C.H."/>
            <person name="Lee J.M."/>
            <person name="Toriumi M.J."/>
            <person name="Chan M.M."/>
            <person name="Tang C.C."/>
            <person name="Onodera C.S."/>
            <person name="Deng J.M."/>
            <person name="Akiyama K."/>
            <person name="Ansari Y."/>
            <person name="Arakawa T."/>
            <person name="Banh J."/>
            <person name="Banno F."/>
            <person name="Bowser L."/>
            <person name="Brooks S.Y."/>
            <person name="Carninci P."/>
            <person name="Chao Q."/>
            <person name="Choy N."/>
            <person name="Enju A."/>
            <person name="Goldsmith A.D."/>
            <person name="Gurjal M."/>
            <person name="Hansen N.F."/>
            <person name="Hayashizaki Y."/>
            <person name="Johnson-Hopson C."/>
            <person name="Hsuan V.W."/>
            <person name="Iida K."/>
            <person name="Karnes M."/>
            <person name="Khan S."/>
            <person name="Koesema E."/>
            <person name="Ishida J."/>
            <person name="Jiang P.X."/>
            <person name="Jones T."/>
            <person name="Kawai J."/>
            <person name="Kamiya A."/>
            <person name="Meyers C."/>
            <person name="Nakajima M."/>
            <person name="Narusaka M."/>
            <person name="Seki M."/>
            <person name="Sakurai T."/>
            <person name="Satou M."/>
            <person name="Tamse R."/>
            <person name="Vaysberg M."/>
            <person name="Wallender E.K."/>
            <person name="Wong C."/>
            <person name="Yamamura Y."/>
            <person name="Yuan S."/>
            <person name="Shinozaki K."/>
            <person name="Davis R.W."/>
            <person name="Theologis A."/>
            <person name="Ecker J.R."/>
        </authorList>
    </citation>
    <scope>NUCLEOTIDE SEQUENCE [LARGE SCALE MRNA]</scope>
    <source>
        <strain>cv. Columbia</strain>
    </source>
</reference>
<reference key="5">
    <citation type="submission" date="2002-03" db="EMBL/GenBank/DDBJ databases">
        <title>Full-length cDNA from Arabidopsis thaliana.</title>
        <authorList>
            <person name="Brover V.V."/>
            <person name="Troukhan M.E."/>
            <person name="Alexandrov N.A."/>
            <person name="Lu Y.-P."/>
            <person name="Flavell R.B."/>
            <person name="Feldmann K.A."/>
        </authorList>
    </citation>
    <scope>NUCLEOTIDE SEQUENCE [LARGE SCALE MRNA]</scope>
</reference>
<reference key="6">
    <citation type="journal article" date="2023" name="Plant Cell">
        <title>An updated nomenclature for plant ribosomal protein genes.</title>
        <authorList>
            <person name="Scarpin M.R."/>
            <person name="Busche M."/>
            <person name="Martinez R.E."/>
            <person name="Harper L.C."/>
            <person name="Reiser L."/>
            <person name="Szakonyi D."/>
            <person name="Merchante C."/>
            <person name="Lan T."/>
            <person name="Xiong W."/>
            <person name="Mo B."/>
            <person name="Tang G."/>
            <person name="Chen X."/>
            <person name="Bailey-Serres J."/>
            <person name="Browning K.S."/>
            <person name="Brunkard J.O."/>
        </authorList>
    </citation>
    <scope>NOMENCLATURE</scope>
</reference>
<dbReference type="EMBL" id="Y14565">
    <property type="protein sequence ID" value="CAA74894.1"/>
    <property type="molecule type" value="mRNA"/>
</dbReference>
<dbReference type="EMBL" id="Y14566">
    <property type="protein sequence ID" value="CAA74895.1"/>
    <property type="molecule type" value="Genomic_DNA"/>
</dbReference>
<dbReference type="EMBL" id="AC022464">
    <property type="protein sequence ID" value="AAF79563.1"/>
    <property type="status" value="ALT_SEQ"/>
    <property type="molecule type" value="Genomic_DNA"/>
</dbReference>
<dbReference type="EMBL" id="CP002684">
    <property type="protein sequence ID" value="AEE28106.1"/>
    <property type="molecule type" value="Genomic_DNA"/>
</dbReference>
<dbReference type="EMBL" id="AY063889">
    <property type="protein sequence ID" value="AAL36245.1"/>
    <property type="molecule type" value="mRNA"/>
</dbReference>
<dbReference type="EMBL" id="AY117317">
    <property type="protein sequence ID" value="AAM51392.1"/>
    <property type="molecule type" value="mRNA"/>
</dbReference>
<dbReference type="EMBL" id="AY085081">
    <property type="protein sequence ID" value="AAM61637.1"/>
    <property type="molecule type" value="mRNA"/>
</dbReference>
<dbReference type="PIR" id="D86208">
    <property type="entry name" value="D86208"/>
</dbReference>
<dbReference type="RefSeq" id="NP_001030985.1">
    <property type="nucleotide sequence ID" value="NM_001035908.2"/>
</dbReference>
<dbReference type="RefSeq" id="NP_001030986.1">
    <property type="nucleotide sequence ID" value="NM_001035909.1"/>
</dbReference>
<dbReference type="RefSeq" id="NP_563786.1">
    <molecule id="O50061-1"/>
    <property type="nucleotide sequence ID" value="NM_100606.4"/>
</dbReference>
<dbReference type="SMR" id="O50061"/>
<dbReference type="BioGRID" id="22484">
    <property type="interactions" value="8"/>
</dbReference>
<dbReference type="FunCoup" id="O50061">
    <property type="interactions" value="912"/>
</dbReference>
<dbReference type="IntAct" id="O50061">
    <property type="interactions" value="1"/>
</dbReference>
<dbReference type="STRING" id="3702.O50061"/>
<dbReference type="iPTMnet" id="O50061"/>
<dbReference type="PaxDb" id="3702-AT1G07320.1"/>
<dbReference type="ProteomicsDB" id="234712">
    <molecule id="O50061-1"/>
</dbReference>
<dbReference type="EnsemblPlants" id="AT1G07320.1">
    <molecule id="O50061-1"/>
    <property type="protein sequence ID" value="AT1G07320.1"/>
    <property type="gene ID" value="AT1G07320"/>
</dbReference>
<dbReference type="GeneID" id="837243"/>
<dbReference type="Gramene" id="AT1G07320.1">
    <molecule id="O50061-1"/>
    <property type="protein sequence ID" value="AT1G07320.1"/>
    <property type="gene ID" value="AT1G07320"/>
</dbReference>
<dbReference type="KEGG" id="ath:AT1G07320"/>
<dbReference type="Araport" id="AT1G07320"/>
<dbReference type="TAIR" id="AT1G07320">
    <property type="gene designation" value="RPL4"/>
</dbReference>
<dbReference type="eggNOG" id="KOG1624">
    <property type="taxonomic scope" value="Eukaryota"/>
</dbReference>
<dbReference type="InParanoid" id="O50061"/>
<dbReference type="PhylomeDB" id="O50061"/>
<dbReference type="PRO" id="PR:O50061"/>
<dbReference type="Proteomes" id="UP000006548">
    <property type="component" value="Chromosome 1"/>
</dbReference>
<dbReference type="ExpressionAtlas" id="O50061">
    <property type="expression patterns" value="baseline and differential"/>
</dbReference>
<dbReference type="GO" id="GO:0009507">
    <property type="term" value="C:chloroplast"/>
    <property type="evidence" value="ECO:0007005"/>
    <property type="project" value="TAIR"/>
</dbReference>
<dbReference type="GO" id="GO:0009570">
    <property type="term" value="C:chloroplast stroma"/>
    <property type="evidence" value="ECO:0007005"/>
    <property type="project" value="TAIR"/>
</dbReference>
<dbReference type="GO" id="GO:0009535">
    <property type="term" value="C:chloroplast thylakoid membrane"/>
    <property type="evidence" value="ECO:0007005"/>
    <property type="project" value="TAIR"/>
</dbReference>
<dbReference type="GO" id="GO:0022626">
    <property type="term" value="C:cytosolic ribosome"/>
    <property type="evidence" value="ECO:0007005"/>
    <property type="project" value="TAIR"/>
</dbReference>
<dbReference type="GO" id="GO:0005576">
    <property type="term" value="C:extracellular region"/>
    <property type="evidence" value="ECO:0007005"/>
    <property type="project" value="TAIR"/>
</dbReference>
<dbReference type="GO" id="GO:0005634">
    <property type="term" value="C:nucleus"/>
    <property type="evidence" value="ECO:0007005"/>
    <property type="project" value="TAIR"/>
</dbReference>
<dbReference type="GO" id="GO:0000311">
    <property type="term" value="C:plastid large ribosomal subunit"/>
    <property type="evidence" value="ECO:0000304"/>
    <property type="project" value="TAIR"/>
</dbReference>
<dbReference type="GO" id="GO:0009547">
    <property type="term" value="C:plastid ribosome"/>
    <property type="evidence" value="ECO:0000314"/>
    <property type="project" value="TAIR"/>
</dbReference>
<dbReference type="GO" id="GO:0009579">
    <property type="term" value="C:thylakoid"/>
    <property type="evidence" value="ECO:0007005"/>
    <property type="project" value="TAIR"/>
</dbReference>
<dbReference type="GO" id="GO:0003729">
    <property type="term" value="F:mRNA binding"/>
    <property type="evidence" value="ECO:0000314"/>
    <property type="project" value="TAIR"/>
</dbReference>
<dbReference type="GO" id="GO:0008266">
    <property type="term" value="F:poly(U) RNA binding"/>
    <property type="evidence" value="ECO:0000314"/>
    <property type="project" value="TAIR"/>
</dbReference>
<dbReference type="GO" id="GO:0019843">
    <property type="term" value="F:rRNA binding"/>
    <property type="evidence" value="ECO:0007669"/>
    <property type="project" value="UniProtKB-KW"/>
</dbReference>
<dbReference type="GO" id="GO:0003735">
    <property type="term" value="F:structural constituent of ribosome"/>
    <property type="evidence" value="ECO:0000250"/>
    <property type="project" value="TAIR"/>
</dbReference>
<dbReference type="GO" id="GO:0006412">
    <property type="term" value="P:translation"/>
    <property type="evidence" value="ECO:0000304"/>
    <property type="project" value="TAIR"/>
</dbReference>
<dbReference type="FunFam" id="3.40.1370.10:FF:000012">
    <property type="entry name" value="50S ribosomal protein L4"/>
    <property type="match status" value="1"/>
</dbReference>
<dbReference type="Gene3D" id="3.40.1370.10">
    <property type="match status" value="1"/>
</dbReference>
<dbReference type="HAMAP" id="MF_01328_B">
    <property type="entry name" value="Ribosomal_uL4_B"/>
    <property type="match status" value="1"/>
</dbReference>
<dbReference type="InterPro" id="IPR002136">
    <property type="entry name" value="Ribosomal_uL4"/>
</dbReference>
<dbReference type="InterPro" id="IPR013005">
    <property type="entry name" value="Ribosomal_uL4-like"/>
</dbReference>
<dbReference type="InterPro" id="IPR023574">
    <property type="entry name" value="Ribosomal_uL4_dom_sf"/>
</dbReference>
<dbReference type="NCBIfam" id="TIGR03953">
    <property type="entry name" value="rplD_bact"/>
    <property type="match status" value="1"/>
</dbReference>
<dbReference type="PANTHER" id="PTHR10746">
    <property type="entry name" value="50S RIBOSOMAL PROTEIN L4"/>
    <property type="match status" value="1"/>
</dbReference>
<dbReference type="PANTHER" id="PTHR10746:SF17">
    <property type="entry name" value="LARGE RIBOSOMAL SUBUNIT PROTEIN UL4C"/>
    <property type="match status" value="1"/>
</dbReference>
<dbReference type="Pfam" id="PF00573">
    <property type="entry name" value="Ribosomal_L4"/>
    <property type="match status" value="1"/>
</dbReference>
<dbReference type="SUPFAM" id="SSF52166">
    <property type="entry name" value="Ribosomal protein L4"/>
    <property type="match status" value="1"/>
</dbReference>
<accession>O50061</accession>
<accession>Q8LF27</accession>
<accession>Q8VZS1</accession>
<accession>Q9LNV1</accession>
<evidence type="ECO:0000250" key="1"/>
<evidence type="ECO:0000256" key="2">
    <source>
        <dbReference type="SAM" id="MobiDB-lite"/>
    </source>
</evidence>
<evidence type="ECO:0000303" key="3">
    <source>
    </source>
</evidence>
<evidence type="ECO:0000305" key="4"/>
<comment type="function">
    <text evidence="1">This protein binds directly and specifically to 23S rRNA (By similarity). May play a role in plastid transcriptional regulation.</text>
</comment>
<comment type="subunit">
    <text evidence="1">Part of the 50S ribosomal subunit.</text>
</comment>
<comment type="subcellular location">
    <subcellularLocation>
        <location>Plastid</location>
        <location>Chloroplast</location>
    </subcellularLocation>
</comment>
<comment type="alternative products">
    <event type="alternative splicing"/>
    <isoform>
        <id>O50061-1</id>
        <name>1</name>
        <sequence type="displayed"/>
    </isoform>
    <text>A number of isoforms are produced. According to EST sequences.</text>
</comment>
<comment type="similarity">
    <text evidence="4">Belongs to the universal ribosomal protein uL4 family.</text>
</comment>
<comment type="sequence caution" evidence="4">
    <conflict type="erroneous gene model prediction">
        <sequence resource="EMBL-CDS" id="AAF79563"/>
    </conflict>
</comment>